<comment type="function">
    <text evidence="3">Required for CNS development: midline glial cells. Involved in the metabolism of insect hormones: responsible for ecdysteroid C2-hydroxylase activity. May be involved in the breakdown of synthetic insecticides.</text>
</comment>
<comment type="catalytic activity">
    <reaction evidence="3">
        <text>2-deoxyecdysone + 2 reduced [adrenodoxin] + O2 + 2 H(+) = ecdysone + 2 oxidized [adrenodoxin] + H2O</text>
        <dbReference type="Rhea" id="RHEA:82351"/>
        <dbReference type="Rhea" id="RHEA-COMP:9998"/>
        <dbReference type="Rhea" id="RHEA-COMP:9999"/>
        <dbReference type="ChEBI" id="CHEBI:15377"/>
        <dbReference type="ChEBI" id="CHEBI:15378"/>
        <dbReference type="ChEBI" id="CHEBI:15379"/>
        <dbReference type="ChEBI" id="CHEBI:16688"/>
        <dbReference type="ChEBI" id="CHEBI:19566"/>
        <dbReference type="ChEBI" id="CHEBI:33737"/>
        <dbReference type="ChEBI" id="CHEBI:33738"/>
    </reaction>
</comment>
<comment type="catalytic activity">
    <reaction evidence="3">
        <text>2,22-dideoxyecdysone + 2 reduced [adrenodoxin] + O2 + 2 H(+) = 22-deoxyecdysone + 2 oxidized [adrenodoxin] + H2O</text>
        <dbReference type="Rhea" id="RHEA:83255"/>
        <dbReference type="Rhea" id="RHEA-COMP:9998"/>
        <dbReference type="Rhea" id="RHEA-COMP:9999"/>
        <dbReference type="ChEBI" id="CHEBI:15377"/>
        <dbReference type="ChEBI" id="CHEBI:15378"/>
        <dbReference type="ChEBI" id="CHEBI:15379"/>
        <dbReference type="ChEBI" id="CHEBI:33737"/>
        <dbReference type="ChEBI" id="CHEBI:33738"/>
        <dbReference type="ChEBI" id="CHEBI:80530"/>
        <dbReference type="ChEBI" id="CHEBI:232767"/>
    </reaction>
</comment>
<comment type="cofactor">
    <cofactor evidence="1">
        <name>heme</name>
        <dbReference type="ChEBI" id="CHEBI:30413"/>
    </cofactor>
</comment>
<comment type="pathway">
    <text evidence="4">Steroid biosynthesis; ecdysteroid biosynthesis.</text>
</comment>
<comment type="subcellular location">
    <subcellularLocation>
        <location evidence="4">Mitochondrion membrane</location>
    </subcellularLocation>
</comment>
<comment type="tissue specificity">
    <text evidence="3">Complex coexpression pattern of dib (disembodied) and sad (shade) in the early embryo that restricts to the prothoracic gland cells of the developing ring gland during late embryogenesis. In larvae and adult, coexpression is seen in prothoracic gland and follicle cells of the ovary. In adults, coexpression is seen in the follicle cells, sad only is expressed in nurse cells.</text>
</comment>
<comment type="miscellaneous">
    <text>Member of the Halloween gene group.</text>
</comment>
<comment type="similarity">
    <text evidence="6">Belongs to the cytochrome P450 family.</text>
</comment>
<gene>
    <name evidence="5 7" type="primary">sad</name>
    <name type="synonym">Cyp315a1</name>
    <name type="ORF">CG14728</name>
</gene>
<feature type="transit peptide" description="Mitochondrion" evidence="2">
    <location>
        <begin position="1"/>
        <end status="unknown"/>
    </location>
</feature>
<feature type="chain" id="PRO_0000003631" description="Cytochrome P450 315a1, mitochondrial">
    <location>
        <begin status="unknown"/>
        <end position="520"/>
    </location>
</feature>
<feature type="binding site" description="axial binding residue" evidence="1">
    <location>
        <position position="466"/>
    </location>
    <ligand>
        <name>heme</name>
        <dbReference type="ChEBI" id="CHEBI:30413"/>
    </ligand>
    <ligandPart>
        <name>Fe</name>
        <dbReference type="ChEBI" id="CHEBI:18248"/>
    </ligandPart>
</feature>
<feature type="sequence conflict" description="In Ref. 1; AAL86019." evidence="6" ref="1">
    <original>A</original>
    <variation>T</variation>
    <location>
        <position position="484"/>
    </location>
</feature>
<feature type="sequence conflict" description="In Ref. 1; AAL86019." evidence="6" ref="1">
    <original>R</original>
    <variation>Q</variation>
    <location>
        <position position="509"/>
    </location>
</feature>
<dbReference type="EC" id="1.14.15.-" evidence="3"/>
<dbReference type="EMBL" id="AY079170">
    <property type="protein sequence ID" value="AAL86019.1"/>
    <property type="molecule type" value="mRNA"/>
</dbReference>
<dbReference type="EMBL" id="AE014297">
    <property type="protein sequence ID" value="AAF54711.1"/>
    <property type="molecule type" value="Genomic_DNA"/>
</dbReference>
<dbReference type="EMBL" id="BT016061">
    <property type="protein sequence ID" value="AAV36946.1"/>
    <property type="molecule type" value="mRNA"/>
</dbReference>
<dbReference type="RefSeq" id="NP_650123.1">
    <property type="nucleotide sequence ID" value="NM_141866.2"/>
</dbReference>
<dbReference type="SMR" id="Q9VGH1"/>
<dbReference type="BioGRID" id="69335">
    <property type="interactions" value="1"/>
</dbReference>
<dbReference type="FunCoup" id="Q9VGH1">
    <property type="interactions" value="39"/>
</dbReference>
<dbReference type="IntAct" id="Q9VGH1">
    <property type="interactions" value="1"/>
</dbReference>
<dbReference type="STRING" id="7227.FBpp0081949"/>
<dbReference type="PaxDb" id="7227-FBpp0081949"/>
<dbReference type="DNASU" id="44858"/>
<dbReference type="EnsemblMetazoa" id="FBtr0082475">
    <property type="protein sequence ID" value="FBpp0081949"/>
    <property type="gene ID" value="FBgn0003312"/>
</dbReference>
<dbReference type="GeneID" id="44858"/>
<dbReference type="KEGG" id="dme:Dmel_CG14728"/>
<dbReference type="AGR" id="FB:FBgn0003312"/>
<dbReference type="CTD" id="44858"/>
<dbReference type="FlyBase" id="FBgn0003312">
    <property type="gene designation" value="sad"/>
</dbReference>
<dbReference type="VEuPathDB" id="VectorBase:FBgn0003312"/>
<dbReference type="eggNOG" id="KOG0159">
    <property type="taxonomic scope" value="Eukaryota"/>
</dbReference>
<dbReference type="GeneTree" id="ENSGT00950000182905"/>
<dbReference type="HOGENOM" id="CLU_001570_28_2_1"/>
<dbReference type="InParanoid" id="Q9VGH1"/>
<dbReference type="OMA" id="VLPERWC"/>
<dbReference type="OrthoDB" id="3945418at2759"/>
<dbReference type="PhylomeDB" id="Q9VGH1"/>
<dbReference type="BioCyc" id="MetaCyc:MONOMER-18113"/>
<dbReference type="Reactome" id="R-DME-193144">
    <property type="pathway name" value="Estrogen biosynthesis"/>
</dbReference>
<dbReference type="Reactome" id="R-DME-211976">
    <property type="pathway name" value="Endogenous sterols"/>
</dbReference>
<dbReference type="UniPathway" id="UPA00765"/>
<dbReference type="BioGRID-ORCS" id="44858">
    <property type="hits" value="0 hits in 3 CRISPR screens"/>
</dbReference>
<dbReference type="GenomeRNAi" id="44858"/>
<dbReference type="PRO" id="PR:Q9VGH1"/>
<dbReference type="Proteomes" id="UP000000803">
    <property type="component" value="Chromosome 3R"/>
</dbReference>
<dbReference type="Bgee" id="FBgn0003312">
    <property type="expression patterns" value="Expressed in posterior terminal follicle cell in ovary and 9 other cell types or tissues"/>
</dbReference>
<dbReference type="GO" id="GO:0031966">
    <property type="term" value="C:mitochondrial membrane"/>
    <property type="evidence" value="ECO:0007669"/>
    <property type="project" value="UniProtKB-SubCell"/>
</dbReference>
<dbReference type="GO" id="GO:0005739">
    <property type="term" value="C:mitochondrion"/>
    <property type="evidence" value="ECO:0000314"/>
    <property type="project" value="FlyBase"/>
</dbReference>
<dbReference type="GO" id="GO:0005634">
    <property type="term" value="C:nucleus"/>
    <property type="evidence" value="ECO:0000314"/>
    <property type="project" value="FlyBase"/>
</dbReference>
<dbReference type="GO" id="GO:0042768">
    <property type="term" value="F:ecdysteroid 2-hydroxylase activity"/>
    <property type="evidence" value="ECO:0000314"/>
    <property type="project" value="FlyBase"/>
</dbReference>
<dbReference type="GO" id="GO:0020037">
    <property type="term" value="F:heme binding"/>
    <property type="evidence" value="ECO:0007669"/>
    <property type="project" value="InterPro"/>
</dbReference>
<dbReference type="GO" id="GO:0005506">
    <property type="term" value="F:iron ion binding"/>
    <property type="evidence" value="ECO:0007669"/>
    <property type="project" value="InterPro"/>
</dbReference>
<dbReference type="GO" id="GO:0007417">
    <property type="term" value="P:central nervous system development"/>
    <property type="evidence" value="ECO:0000315"/>
    <property type="project" value="FlyBase"/>
</dbReference>
<dbReference type="GO" id="GO:0007391">
    <property type="term" value="P:dorsal closure"/>
    <property type="evidence" value="ECO:0000315"/>
    <property type="project" value="FlyBase"/>
</dbReference>
<dbReference type="GO" id="GO:0006697">
    <property type="term" value="P:ecdysone biosynthetic process"/>
    <property type="evidence" value="ECO:0000314"/>
    <property type="project" value="FlyBase"/>
</dbReference>
<dbReference type="GO" id="GO:0008258">
    <property type="term" value="P:head involution"/>
    <property type="evidence" value="ECO:0000315"/>
    <property type="project" value="FlyBase"/>
</dbReference>
<dbReference type="GO" id="GO:0007494">
    <property type="term" value="P:midgut development"/>
    <property type="evidence" value="ECO:0000315"/>
    <property type="project" value="FlyBase"/>
</dbReference>
<dbReference type="GO" id="GO:0008045">
    <property type="term" value="P:motor neuron axon guidance"/>
    <property type="evidence" value="ECO:0000315"/>
    <property type="project" value="FlyBase"/>
</dbReference>
<dbReference type="CDD" id="cd11054">
    <property type="entry name" value="CYP24A1-like"/>
    <property type="match status" value="1"/>
</dbReference>
<dbReference type="FunFam" id="1.10.630.10:FF:000166">
    <property type="entry name" value="cytochrome P450 315a1, mitochondrial"/>
    <property type="match status" value="1"/>
</dbReference>
<dbReference type="Gene3D" id="1.10.630.10">
    <property type="entry name" value="Cytochrome P450"/>
    <property type="match status" value="1"/>
</dbReference>
<dbReference type="InterPro" id="IPR050479">
    <property type="entry name" value="CYP11_CYP27_families"/>
</dbReference>
<dbReference type="InterPro" id="IPR001128">
    <property type="entry name" value="Cyt_P450"/>
</dbReference>
<dbReference type="InterPro" id="IPR002401">
    <property type="entry name" value="Cyt_P450_E_grp-I"/>
</dbReference>
<dbReference type="InterPro" id="IPR036396">
    <property type="entry name" value="Cyt_P450_sf"/>
</dbReference>
<dbReference type="PANTHER" id="PTHR24279">
    <property type="entry name" value="CYTOCHROME P450"/>
    <property type="match status" value="1"/>
</dbReference>
<dbReference type="PANTHER" id="PTHR24279:SF120">
    <property type="entry name" value="CYTOCHROME P450"/>
    <property type="match status" value="1"/>
</dbReference>
<dbReference type="Pfam" id="PF00067">
    <property type="entry name" value="p450"/>
    <property type="match status" value="1"/>
</dbReference>
<dbReference type="PRINTS" id="PR00463">
    <property type="entry name" value="EP450I"/>
</dbReference>
<dbReference type="PRINTS" id="PR00385">
    <property type="entry name" value="P450"/>
</dbReference>
<dbReference type="SUPFAM" id="SSF48264">
    <property type="entry name" value="Cytochrome P450"/>
    <property type="match status" value="1"/>
</dbReference>
<accession>Q9VGH1</accession>
<accession>Q5U131</accession>
<accession>Q8MTR7</accession>
<keyword id="KW-0349">Heme</keyword>
<keyword id="KW-0408">Iron</keyword>
<keyword id="KW-0472">Membrane</keyword>
<keyword id="KW-0479">Metal-binding</keyword>
<keyword id="KW-0496">Mitochondrion</keyword>
<keyword id="KW-0503">Monooxygenase</keyword>
<keyword id="KW-0560">Oxidoreductase</keyword>
<keyword id="KW-1185">Reference proteome</keyword>
<keyword id="KW-0809">Transit peptide</keyword>
<reference key="1">
    <citation type="journal article" date="2002" name="Proc. Natl. Acad. Sci. U.S.A.">
        <title>Molecular and biochemical characterization of two P450 enzymes in the ecdysteroidogenic pathway of Drosophila melanogaster.</title>
        <authorList>
            <person name="Warren J.T."/>
            <person name="Petryk A."/>
            <person name="Marques G."/>
            <person name="Jarcho M.P."/>
            <person name="Parvy J.-P."/>
            <person name="Dauphin-Villemant C."/>
            <person name="O'Connor M.B."/>
            <person name="Gilbert L.I."/>
        </authorList>
    </citation>
    <scope>NUCLEOTIDE SEQUENCE</scope>
    <scope>FUNCTION</scope>
    <scope>CATALYTIC ACTIVITY</scope>
    <scope>TISSUE SPECIFICITY</scope>
    <source>
        <tissue>Embryo</tissue>
    </source>
</reference>
<reference key="2">
    <citation type="journal article" date="2000" name="Science">
        <title>The genome sequence of Drosophila melanogaster.</title>
        <authorList>
            <person name="Adams M.D."/>
            <person name="Celniker S.E."/>
            <person name="Holt R.A."/>
            <person name="Evans C.A."/>
            <person name="Gocayne J.D."/>
            <person name="Amanatides P.G."/>
            <person name="Scherer S.E."/>
            <person name="Li P.W."/>
            <person name="Hoskins R.A."/>
            <person name="Galle R.F."/>
            <person name="George R.A."/>
            <person name="Lewis S.E."/>
            <person name="Richards S."/>
            <person name="Ashburner M."/>
            <person name="Henderson S.N."/>
            <person name="Sutton G.G."/>
            <person name="Wortman J.R."/>
            <person name="Yandell M.D."/>
            <person name="Zhang Q."/>
            <person name="Chen L.X."/>
            <person name="Brandon R.C."/>
            <person name="Rogers Y.-H.C."/>
            <person name="Blazej R.G."/>
            <person name="Champe M."/>
            <person name="Pfeiffer B.D."/>
            <person name="Wan K.H."/>
            <person name="Doyle C."/>
            <person name="Baxter E.G."/>
            <person name="Helt G."/>
            <person name="Nelson C.R."/>
            <person name="Miklos G.L.G."/>
            <person name="Abril J.F."/>
            <person name="Agbayani A."/>
            <person name="An H.-J."/>
            <person name="Andrews-Pfannkoch C."/>
            <person name="Baldwin D."/>
            <person name="Ballew R.M."/>
            <person name="Basu A."/>
            <person name="Baxendale J."/>
            <person name="Bayraktaroglu L."/>
            <person name="Beasley E.M."/>
            <person name="Beeson K.Y."/>
            <person name="Benos P.V."/>
            <person name="Berman B.P."/>
            <person name="Bhandari D."/>
            <person name="Bolshakov S."/>
            <person name="Borkova D."/>
            <person name="Botchan M.R."/>
            <person name="Bouck J."/>
            <person name="Brokstein P."/>
            <person name="Brottier P."/>
            <person name="Burtis K.C."/>
            <person name="Busam D.A."/>
            <person name="Butler H."/>
            <person name="Cadieu E."/>
            <person name="Center A."/>
            <person name="Chandra I."/>
            <person name="Cherry J.M."/>
            <person name="Cawley S."/>
            <person name="Dahlke C."/>
            <person name="Davenport L.B."/>
            <person name="Davies P."/>
            <person name="de Pablos B."/>
            <person name="Delcher A."/>
            <person name="Deng Z."/>
            <person name="Mays A.D."/>
            <person name="Dew I."/>
            <person name="Dietz S.M."/>
            <person name="Dodson K."/>
            <person name="Doup L.E."/>
            <person name="Downes M."/>
            <person name="Dugan-Rocha S."/>
            <person name="Dunkov B.C."/>
            <person name="Dunn P."/>
            <person name="Durbin K.J."/>
            <person name="Evangelista C.C."/>
            <person name="Ferraz C."/>
            <person name="Ferriera S."/>
            <person name="Fleischmann W."/>
            <person name="Fosler C."/>
            <person name="Gabrielian A.E."/>
            <person name="Garg N.S."/>
            <person name="Gelbart W.M."/>
            <person name="Glasser K."/>
            <person name="Glodek A."/>
            <person name="Gong F."/>
            <person name="Gorrell J.H."/>
            <person name="Gu Z."/>
            <person name="Guan P."/>
            <person name="Harris M."/>
            <person name="Harris N.L."/>
            <person name="Harvey D.A."/>
            <person name="Heiman T.J."/>
            <person name="Hernandez J.R."/>
            <person name="Houck J."/>
            <person name="Hostin D."/>
            <person name="Houston K.A."/>
            <person name="Howland T.J."/>
            <person name="Wei M.-H."/>
            <person name="Ibegwam C."/>
            <person name="Jalali M."/>
            <person name="Kalush F."/>
            <person name="Karpen G.H."/>
            <person name="Ke Z."/>
            <person name="Kennison J.A."/>
            <person name="Ketchum K.A."/>
            <person name="Kimmel B.E."/>
            <person name="Kodira C.D."/>
            <person name="Kraft C.L."/>
            <person name="Kravitz S."/>
            <person name="Kulp D."/>
            <person name="Lai Z."/>
            <person name="Lasko P."/>
            <person name="Lei Y."/>
            <person name="Levitsky A.A."/>
            <person name="Li J.H."/>
            <person name="Li Z."/>
            <person name="Liang Y."/>
            <person name="Lin X."/>
            <person name="Liu X."/>
            <person name="Mattei B."/>
            <person name="McIntosh T.C."/>
            <person name="McLeod M.P."/>
            <person name="McPherson D."/>
            <person name="Merkulov G."/>
            <person name="Milshina N.V."/>
            <person name="Mobarry C."/>
            <person name="Morris J."/>
            <person name="Moshrefi A."/>
            <person name="Mount S.M."/>
            <person name="Moy M."/>
            <person name="Murphy B."/>
            <person name="Murphy L."/>
            <person name="Muzny D.M."/>
            <person name="Nelson D.L."/>
            <person name="Nelson D.R."/>
            <person name="Nelson K.A."/>
            <person name="Nixon K."/>
            <person name="Nusskern D.R."/>
            <person name="Pacleb J.M."/>
            <person name="Palazzolo M."/>
            <person name="Pittman G.S."/>
            <person name="Pan S."/>
            <person name="Pollard J."/>
            <person name="Puri V."/>
            <person name="Reese M.G."/>
            <person name="Reinert K."/>
            <person name="Remington K."/>
            <person name="Saunders R.D.C."/>
            <person name="Scheeler F."/>
            <person name="Shen H."/>
            <person name="Shue B.C."/>
            <person name="Siden-Kiamos I."/>
            <person name="Simpson M."/>
            <person name="Skupski M.P."/>
            <person name="Smith T.J."/>
            <person name="Spier E."/>
            <person name="Spradling A.C."/>
            <person name="Stapleton M."/>
            <person name="Strong R."/>
            <person name="Sun E."/>
            <person name="Svirskas R."/>
            <person name="Tector C."/>
            <person name="Turner R."/>
            <person name="Venter E."/>
            <person name="Wang A.H."/>
            <person name="Wang X."/>
            <person name="Wang Z.-Y."/>
            <person name="Wassarman D.A."/>
            <person name="Weinstock G.M."/>
            <person name="Weissenbach J."/>
            <person name="Williams S.M."/>
            <person name="Woodage T."/>
            <person name="Worley K.C."/>
            <person name="Wu D."/>
            <person name="Yang S."/>
            <person name="Yao Q.A."/>
            <person name="Ye J."/>
            <person name="Yeh R.-F."/>
            <person name="Zaveri J.S."/>
            <person name="Zhan M."/>
            <person name="Zhang G."/>
            <person name="Zhao Q."/>
            <person name="Zheng L."/>
            <person name="Zheng X.H."/>
            <person name="Zhong F.N."/>
            <person name="Zhong W."/>
            <person name="Zhou X."/>
            <person name="Zhu S.C."/>
            <person name="Zhu X."/>
            <person name="Smith H.O."/>
            <person name="Gibbs R.A."/>
            <person name="Myers E.W."/>
            <person name="Rubin G.M."/>
            <person name="Venter J.C."/>
        </authorList>
    </citation>
    <scope>NUCLEOTIDE SEQUENCE [LARGE SCALE GENOMIC DNA]</scope>
    <source>
        <strain>Berkeley</strain>
    </source>
</reference>
<reference key="3">
    <citation type="journal article" date="2002" name="Genome Biol.">
        <title>Annotation of the Drosophila melanogaster euchromatic genome: a systematic review.</title>
        <authorList>
            <person name="Misra S."/>
            <person name="Crosby M.A."/>
            <person name="Mungall C.J."/>
            <person name="Matthews B.B."/>
            <person name="Campbell K.S."/>
            <person name="Hradecky P."/>
            <person name="Huang Y."/>
            <person name="Kaminker J.S."/>
            <person name="Millburn G.H."/>
            <person name="Prochnik S.E."/>
            <person name="Smith C.D."/>
            <person name="Tupy J.L."/>
            <person name="Whitfield E.J."/>
            <person name="Bayraktaroglu L."/>
            <person name="Berman B.P."/>
            <person name="Bettencourt B.R."/>
            <person name="Celniker S.E."/>
            <person name="de Grey A.D.N.J."/>
            <person name="Drysdale R.A."/>
            <person name="Harris N.L."/>
            <person name="Richter J."/>
            <person name="Russo S."/>
            <person name="Schroeder A.J."/>
            <person name="Shu S.Q."/>
            <person name="Stapleton M."/>
            <person name="Yamada C."/>
            <person name="Ashburner M."/>
            <person name="Gelbart W.M."/>
            <person name="Rubin G.M."/>
            <person name="Lewis S.E."/>
        </authorList>
    </citation>
    <scope>GENOME REANNOTATION</scope>
    <source>
        <strain>Berkeley</strain>
    </source>
</reference>
<reference key="4">
    <citation type="submission" date="2004-10" db="EMBL/GenBank/DDBJ databases">
        <authorList>
            <person name="Stapleton M."/>
            <person name="Carlson J.W."/>
            <person name="Chavez C."/>
            <person name="Frise E."/>
            <person name="George R.A."/>
            <person name="Pacleb J.M."/>
            <person name="Park S."/>
            <person name="Wan K.H."/>
            <person name="Yu C."/>
            <person name="Rubin G.M."/>
            <person name="Celniker S.E."/>
        </authorList>
    </citation>
    <scope>NUCLEOTIDE SEQUENCE [LARGE SCALE MRNA]</scope>
    <source>
        <strain>Berkeley</strain>
        <tissue>Larva</tissue>
        <tissue>Pupae</tissue>
    </source>
</reference>
<reference key="5">
    <citation type="journal article" date="2003" name="Proc. Natl. Acad. Sci. U.S.A.">
        <title>Shade is the Drosophila P450 enzyme that mediates the hydroxylation of ecdysone to the steroid insect molting hormone 20-hydroxyecdysone.</title>
        <authorList>
            <person name="Petryk A."/>
            <person name="Warren J.T."/>
            <person name="Marques G."/>
            <person name="Jarcho M.P."/>
            <person name="Gilbert L.I."/>
            <person name="Kahler J."/>
            <person name="Parvy J.-P."/>
            <person name="Li Y."/>
            <person name="Dauphin-Villemant C."/>
            <person name="O'Connor M.B."/>
        </authorList>
    </citation>
    <scope>SUBCELLULAR LOCATION</scope>
    <scope>PATHWAY</scope>
</reference>
<evidence type="ECO:0000250" key="1">
    <source>
        <dbReference type="UniProtKB" id="P04798"/>
    </source>
</evidence>
<evidence type="ECO:0000255" key="2"/>
<evidence type="ECO:0000269" key="3">
    <source>
    </source>
</evidence>
<evidence type="ECO:0000269" key="4">
    <source>
    </source>
</evidence>
<evidence type="ECO:0000303" key="5">
    <source>
    </source>
</evidence>
<evidence type="ECO:0000305" key="6"/>
<evidence type="ECO:0000312" key="7">
    <source>
        <dbReference type="FlyBase" id="FBgn0003312"/>
    </source>
</evidence>
<proteinExistence type="evidence at protein level"/>
<sequence>MTEKRERPGPLRWLRHLLDQLLVRILSLSLFRSRCDPPPLQRFPATELPPAVAAKYVPIPRVKGLPVVGTLVDLIAAGGATHLHKYIDARHKQYGPIFRERLGGTQDAVFVSSANLMRGVFQHEGQYPQHPLPDAWTLYNQQHACQRGLFFMEGAEWLHNRRILNRLLLNGNLNWMDVHIESCTRRMVDQWKRRTAEAAAIPLAESGEIRSYELPLLEQQLYRWSIEVLCCIMFGTSVLTCPKIQSSLDYFTQIVHKVFEHSSRLMTFPPRLAQILRLPIWRDFEANVDEVLREGAAIIDHCIRVQEDQRRPHDEALYHRLQAADVPGDMIKRIFVDLVIAAGDTTAFSSQWALFALSKEPRLQQRLAKERATNDSRLMHGLIKESLRLYPVAPFIGRYLPQDAQLGGHFIEKDTMVLLSLYTAGRDPSHFEQPERVLPERWCIGETEQVHKSHGSLPFAIGQRSCIGRRVALKQLHSLLGRCAAQFEMSCLNEMPVDSVLRMVTVPDRTLRLALRPRTE</sequence>
<organism>
    <name type="scientific">Drosophila melanogaster</name>
    <name type="common">Fruit fly</name>
    <dbReference type="NCBI Taxonomy" id="7227"/>
    <lineage>
        <taxon>Eukaryota</taxon>
        <taxon>Metazoa</taxon>
        <taxon>Ecdysozoa</taxon>
        <taxon>Arthropoda</taxon>
        <taxon>Hexapoda</taxon>
        <taxon>Insecta</taxon>
        <taxon>Pterygota</taxon>
        <taxon>Neoptera</taxon>
        <taxon>Endopterygota</taxon>
        <taxon>Diptera</taxon>
        <taxon>Brachycera</taxon>
        <taxon>Muscomorpha</taxon>
        <taxon>Ephydroidea</taxon>
        <taxon>Drosophilidae</taxon>
        <taxon>Drosophila</taxon>
        <taxon>Sophophora</taxon>
    </lineage>
</organism>
<name>CP315_DROME</name>
<protein>
    <recommendedName>
        <fullName>Cytochrome P450 315a1, mitochondrial</fullName>
        <ecNumber evidence="3">1.14.15.-</ecNumber>
    </recommendedName>
    <alternativeName>
        <fullName>CYPCCCXVA1</fullName>
    </alternativeName>
    <alternativeName>
        <fullName evidence="5">Protein shadow</fullName>
    </alternativeName>
</protein>